<sequence>MARVTVEDAVKQVGNRFDLVLVAARRARQIAVQGKDPLVDEENDKPTVIALREIELGLVNNQVMDTQDRYEQQEQEAAELAAVAAIAEGRG</sequence>
<comment type="function">
    <text evidence="1">Promotes RNA polymerase assembly. Latches the N- and C-terminal regions of the beta' subunit thereby facilitating its interaction with the beta and alpha subunits.</text>
</comment>
<comment type="catalytic activity">
    <reaction evidence="1">
        <text>RNA(n) + a ribonucleoside 5'-triphosphate = RNA(n+1) + diphosphate</text>
        <dbReference type="Rhea" id="RHEA:21248"/>
        <dbReference type="Rhea" id="RHEA-COMP:14527"/>
        <dbReference type="Rhea" id="RHEA-COMP:17342"/>
        <dbReference type="ChEBI" id="CHEBI:33019"/>
        <dbReference type="ChEBI" id="CHEBI:61557"/>
        <dbReference type="ChEBI" id="CHEBI:140395"/>
        <dbReference type="EC" id="2.7.7.6"/>
    </reaction>
</comment>
<comment type="subunit">
    <text evidence="1">The RNAP catalytic core consists of 2 alpha, 1 beta, 1 beta' and 1 omega subunit. When a sigma factor is associated with the core the holoenzyme is formed, which can initiate transcription.</text>
</comment>
<comment type="similarity">
    <text evidence="1">Belongs to the RNA polymerase subunit omega family.</text>
</comment>
<name>RPOZ_AERHH</name>
<keyword id="KW-0240">DNA-directed RNA polymerase</keyword>
<keyword id="KW-0548">Nucleotidyltransferase</keyword>
<keyword id="KW-1185">Reference proteome</keyword>
<keyword id="KW-0804">Transcription</keyword>
<keyword id="KW-0808">Transferase</keyword>
<gene>
    <name evidence="1" type="primary">rpoZ</name>
    <name type="ordered locus">AHA_0040</name>
</gene>
<dbReference type="EC" id="2.7.7.6" evidence="1"/>
<dbReference type="EMBL" id="CP000462">
    <property type="protein sequence ID" value="ABK37121.1"/>
    <property type="molecule type" value="Genomic_DNA"/>
</dbReference>
<dbReference type="RefSeq" id="WP_005307060.1">
    <property type="nucleotide sequence ID" value="NC_008570.1"/>
</dbReference>
<dbReference type="RefSeq" id="YP_854565.1">
    <property type="nucleotide sequence ID" value="NC_008570.1"/>
</dbReference>
<dbReference type="SMR" id="A0KR23"/>
<dbReference type="STRING" id="380703.AHA_0040"/>
<dbReference type="EnsemblBacteria" id="ABK37121">
    <property type="protein sequence ID" value="ABK37121"/>
    <property type="gene ID" value="AHA_0040"/>
</dbReference>
<dbReference type="GeneID" id="97858946"/>
<dbReference type="KEGG" id="aha:AHA_0040"/>
<dbReference type="PATRIC" id="fig|380703.7.peg.35"/>
<dbReference type="eggNOG" id="COG1758">
    <property type="taxonomic scope" value="Bacteria"/>
</dbReference>
<dbReference type="HOGENOM" id="CLU_125406_5_3_6"/>
<dbReference type="OrthoDB" id="9796300at2"/>
<dbReference type="PRO" id="PR:A0KR23"/>
<dbReference type="Proteomes" id="UP000000756">
    <property type="component" value="Chromosome"/>
</dbReference>
<dbReference type="GO" id="GO:0000428">
    <property type="term" value="C:DNA-directed RNA polymerase complex"/>
    <property type="evidence" value="ECO:0007669"/>
    <property type="project" value="UniProtKB-KW"/>
</dbReference>
<dbReference type="GO" id="GO:0003677">
    <property type="term" value="F:DNA binding"/>
    <property type="evidence" value="ECO:0007669"/>
    <property type="project" value="UniProtKB-UniRule"/>
</dbReference>
<dbReference type="GO" id="GO:0003899">
    <property type="term" value="F:DNA-directed RNA polymerase activity"/>
    <property type="evidence" value="ECO:0007669"/>
    <property type="project" value="UniProtKB-UniRule"/>
</dbReference>
<dbReference type="GO" id="GO:0006351">
    <property type="term" value="P:DNA-templated transcription"/>
    <property type="evidence" value="ECO:0007669"/>
    <property type="project" value="UniProtKB-UniRule"/>
</dbReference>
<dbReference type="Gene3D" id="3.90.940.10">
    <property type="match status" value="1"/>
</dbReference>
<dbReference type="HAMAP" id="MF_00366">
    <property type="entry name" value="RNApol_bact_RpoZ"/>
    <property type="match status" value="1"/>
</dbReference>
<dbReference type="InterPro" id="IPR003716">
    <property type="entry name" value="DNA-dir_RNA_pol_omega"/>
</dbReference>
<dbReference type="InterPro" id="IPR006110">
    <property type="entry name" value="Pol_omega/Rpo6/RPB6"/>
</dbReference>
<dbReference type="InterPro" id="IPR036161">
    <property type="entry name" value="RPB6/omega-like_sf"/>
</dbReference>
<dbReference type="NCBIfam" id="TIGR00690">
    <property type="entry name" value="rpoZ"/>
    <property type="match status" value="1"/>
</dbReference>
<dbReference type="PANTHER" id="PTHR34476">
    <property type="entry name" value="DNA-DIRECTED RNA POLYMERASE SUBUNIT OMEGA"/>
    <property type="match status" value="1"/>
</dbReference>
<dbReference type="PANTHER" id="PTHR34476:SF1">
    <property type="entry name" value="DNA-DIRECTED RNA POLYMERASE SUBUNIT OMEGA"/>
    <property type="match status" value="1"/>
</dbReference>
<dbReference type="Pfam" id="PF01192">
    <property type="entry name" value="RNA_pol_Rpb6"/>
    <property type="match status" value="1"/>
</dbReference>
<dbReference type="SMART" id="SM01409">
    <property type="entry name" value="RNA_pol_Rpb6"/>
    <property type="match status" value="1"/>
</dbReference>
<dbReference type="SUPFAM" id="SSF63562">
    <property type="entry name" value="RPB6/omega subunit-like"/>
    <property type="match status" value="1"/>
</dbReference>
<evidence type="ECO:0000255" key="1">
    <source>
        <dbReference type="HAMAP-Rule" id="MF_00366"/>
    </source>
</evidence>
<reference key="1">
    <citation type="journal article" date="2006" name="J. Bacteriol.">
        <title>Genome sequence of Aeromonas hydrophila ATCC 7966T: jack of all trades.</title>
        <authorList>
            <person name="Seshadri R."/>
            <person name="Joseph S.W."/>
            <person name="Chopra A.K."/>
            <person name="Sha J."/>
            <person name="Shaw J."/>
            <person name="Graf J."/>
            <person name="Haft D.H."/>
            <person name="Wu M."/>
            <person name="Ren Q."/>
            <person name="Rosovitz M.J."/>
            <person name="Madupu R."/>
            <person name="Tallon L."/>
            <person name="Kim M."/>
            <person name="Jin S."/>
            <person name="Vuong H."/>
            <person name="Stine O.C."/>
            <person name="Ali A."/>
            <person name="Horneman A.J."/>
            <person name="Heidelberg J.F."/>
        </authorList>
    </citation>
    <scope>NUCLEOTIDE SEQUENCE [LARGE SCALE GENOMIC DNA]</scope>
    <source>
        <strain>ATCC 7966 / DSM 30187 / BCRC 13018 / CCUG 14551 / JCM 1027 / KCTC 2358 / NCIMB 9240 / NCTC 8049</strain>
    </source>
</reference>
<proteinExistence type="inferred from homology"/>
<feature type="chain" id="PRO_1000005881" description="DNA-directed RNA polymerase subunit omega">
    <location>
        <begin position="1"/>
        <end position="91"/>
    </location>
</feature>
<organism>
    <name type="scientific">Aeromonas hydrophila subsp. hydrophila (strain ATCC 7966 / DSM 30187 / BCRC 13018 / CCUG 14551 / JCM 1027 / KCTC 2358 / NCIMB 9240 / NCTC 8049)</name>
    <dbReference type="NCBI Taxonomy" id="380703"/>
    <lineage>
        <taxon>Bacteria</taxon>
        <taxon>Pseudomonadati</taxon>
        <taxon>Pseudomonadota</taxon>
        <taxon>Gammaproteobacteria</taxon>
        <taxon>Aeromonadales</taxon>
        <taxon>Aeromonadaceae</taxon>
        <taxon>Aeromonas</taxon>
    </lineage>
</organism>
<protein>
    <recommendedName>
        <fullName evidence="1">DNA-directed RNA polymerase subunit omega</fullName>
        <shortName evidence="1">RNAP omega subunit</shortName>
        <ecNumber evidence="1">2.7.7.6</ecNumber>
    </recommendedName>
    <alternativeName>
        <fullName evidence="1">RNA polymerase omega subunit</fullName>
    </alternativeName>
    <alternativeName>
        <fullName evidence="1">Transcriptase subunit omega</fullName>
    </alternativeName>
</protein>
<accession>A0KR23</accession>